<gene>
    <name evidence="1" type="primary">psmB2</name>
    <name type="ordered locus">M1425_1854</name>
</gene>
<organism>
    <name type="scientific">Saccharolobus islandicus (strain M.14.25 / Kamchatka #1)</name>
    <name type="common">Sulfolobus islandicus</name>
    <dbReference type="NCBI Taxonomy" id="427317"/>
    <lineage>
        <taxon>Archaea</taxon>
        <taxon>Thermoproteota</taxon>
        <taxon>Thermoprotei</taxon>
        <taxon>Sulfolobales</taxon>
        <taxon>Sulfolobaceae</taxon>
        <taxon>Saccharolobus</taxon>
    </lineage>
</organism>
<proteinExistence type="inferred from homology"/>
<evidence type="ECO:0000255" key="1">
    <source>
        <dbReference type="HAMAP-Rule" id="MF_02113"/>
    </source>
</evidence>
<name>PSB2_SACI4</name>
<sequence>MEELPATAIGLKVNDGIVLASERRLSYGGYVLSKQAKKVHKIGKFLMAGAGIYGDLQTLTRIMNVEIKYYEISTGKPISVHAAAKLLSVILYQYKVMPFISEILFGGVDEKGPQLYVLDPIGSLIEDNYAAVGSGARIAIGVLESEYDPNMNLDIAAQLITKAIKASIERDITSGDGIDLAIMDKKGNYENKFIPY</sequence>
<reference key="1">
    <citation type="journal article" date="2009" name="Proc. Natl. Acad. Sci. U.S.A.">
        <title>Biogeography of the Sulfolobus islandicus pan-genome.</title>
        <authorList>
            <person name="Reno M.L."/>
            <person name="Held N.L."/>
            <person name="Fields C.J."/>
            <person name="Burke P.V."/>
            <person name="Whitaker R.J."/>
        </authorList>
    </citation>
    <scope>NUCLEOTIDE SEQUENCE [LARGE SCALE GENOMIC DNA]</scope>
    <source>
        <strain>M.14.25 / Kamchatka #1</strain>
    </source>
</reference>
<protein>
    <recommendedName>
        <fullName evidence="1">Proteasome subunit beta 2</fullName>
        <ecNumber evidence="1">3.4.25.1</ecNumber>
    </recommendedName>
    <alternativeName>
        <fullName evidence="1">20S proteasome beta subunit 2</fullName>
    </alternativeName>
    <alternativeName>
        <fullName evidence="1">Proteasome core protein PsmB 2</fullName>
    </alternativeName>
</protein>
<feature type="propeptide" id="PRO_0000397436" description="Removed in mature form; by autocatalysis" evidence="1">
    <location>
        <begin position="1"/>
        <end position="6"/>
    </location>
</feature>
<feature type="chain" id="PRO_0000397437" description="Proteasome subunit beta 2">
    <location>
        <begin position="7"/>
        <end position="196"/>
    </location>
</feature>
<feature type="active site" description="Nucleophile" evidence="1">
    <location>
        <position position="7"/>
    </location>
</feature>
<keyword id="KW-0068">Autocatalytic cleavage</keyword>
<keyword id="KW-0963">Cytoplasm</keyword>
<keyword id="KW-0378">Hydrolase</keyword>
<keyword id="KW-0645">Protease</keyword>
<keyword id="KW-0647">Proteasome</keyword>
<keyword id="KW-0888">Threonine protease</keyword>
<keyword id="KW-0865">Zymogen</keyword>
<dbReference type="EC" id="3.4.25.1" evidence="1"/>
<dbReference type="EMBL" id="CP001400">
    <property type="protein sequence ID" value="ACP38598.1"/>
    <property type="molecule type" value="Genomic_DNA"/>
</dbReference>
<dbReference type="SMR" id="C3MY41"/>
<dbReference type="KEGG" id="sia:M1425_1854"/>
<dbReference type="HOGENOM" id="CLU_035750_7_2_2"/>
<dbReference type="Proteomes" id="UP000001350">
    <property type="component" value="Chromosome"/>
</dbReference>
<dbReference type="GO" id="GO:0005737">
    <property type="term" value="C:cytoplasm"/>
    <property type="evidence" value="ECO:0007669"/>
    <property type="project" value="UniProtKB-SubCell"/>
</dbReference>
<dbReference type="GO" id="GO:0019774">
    <property type="term" value="C:proteasome core complex, beta-subunit complex"/>
    <property type="evidence" value="ECO:0007669"/>
    <property type="project" value="UniProtKB-UniRule"/>
</dbReference>
<dbReference type="GO" id="GO:0004298">
    <property type="term" value="F:threonine-type endopeptidase activity"/>
    <property type="evidence" value="ECO:0007669"/>
    <property type="project" value="UniProtKB-UniRule"/>
</dbReference>
<dbReference type="GO" id="GO:0010498">
    <property type="term" value="P:proteasomal protein catabolic process"/>
    <property type="evidence" value="ECO:0007669"/>
    <property type="project" value="UniProtKB-UniRule"/>
</dbReference>
<dbReference type="FunFam" id="3.60.20.10:FF:000079">
    <property type="entry name" value="Proteasome subunit beta 2"/>
    <property type="match status" value="1"/>
</dbReference>
<dbReference type="Gene3D" id="3.60.20.10">
    <property type="entry name" value="Glutamine Phosphoribosylpyrophosphate, subunit 1, domain 1"/>
    <property type="match status" value="1"/>
</dbReference>
<dbReference type="HAMAP" id="MF_02113_A">
    <property type="entry name" value="Proteasome_B_A"/>
    <property type="match status" value="1"/>
</dbReference>
<dbReference type="InterPro" id="IPR029055">
    <property type="entry name" value="Ntn_hydrolases_N"/>
</dbReference>
<dbReference type="InterPro" id="IPR019983">
    <property type="entry name" value="Pept_T1A_Psome_bsu_arc"/>
</dbReference>
<dbReference type="InterPro" id="IPR000243">
    <property type="entry name" value="Pept_T1A_subB"/>
</dbReference>
<dbReference type="InterPro" id="IPR016050">
    <property type="entry name" value="Proteasome_bsu_CS"/>
</dbReference>
<dbReference type="InterPro" id="IPR001353">
    <property type="entry name" value="Proteasome_sua/b"/>
</dbReference>
<dbReference type="InterPro" id="IPR023333">
    <property type="entry name" value="Proteasome_suB-type"/>
</dbReference>
<dbReference type="NCBIfam" id="TIGR03634">
    <property type="entry name" value="arc_protsome_B"/>
    <property type="match status" value="1"/>
</dbReference>
<dbReference type="PANTHER" id="PTHR32194:SF0">
    <property type="entry name" value="ATP-DEPENDENT PROTEASE SUBUNIT HSLV"/>
    <property type="match status" value="1"/>
</dbReference>
<dbReference type="PANTHER" id="PTHR32194">
    <property type="entry name" value="METALLOPROTEASE TLDD"/>
    <property type="match status" value="1"/>
</dbReference>
<dbReference type="Pfam" id="PF00227">
    <property type="entry name" value="Proteasome"/>
    <property type="match status" value="1"/>
</dbReference>
<dbReference type="PRINTS" id="PR00141">
    <property type="entry name" value="PROTEASOME"/>
</dbReference>
<dbReference type="SUPFAM" id="SSF56235">
    <property type="entry name" value="N-terminal nucleophile aminohydrolases (Ntn hydrolases)"/>
    <property type="match status" value="1"/>
</dbReference>
<dbReference type="PROSITE" id="PS00854">
    <property type="entry name" value="PROTEASOME_BETA_1"/>
    <property type="match status" value="1"/>
</dbReference>
<dbReference type="PROSITE" id="PS51476">
    <property type="entry name" value="PROTEASOME_BETA_2"/>
    <property type="match status" value="1"/>
</dbReference>
<accession>C3MY41</accession>
<comment type="function">
    <text evidence="1">Component of the proteasome core, a large protease complex with broad specificity involved in protein degradation.</text>
</comment>
<comment type="catalytic activity">
    <reaction evidence="1">
        <text>Cleavage of peptide bonds with very broad specificity.</text>
        <dbReference type="EC" id="3.4.25.1"/>
    </reaction>
</comment>
<comment type="activity regulation">
    <text evidence="1">The formation of the proteasomal ATPase PAN-20S proteasome complex, via the docking of the C-termini of PAN into the intersubunit pockets in the alpha-rings, triggers opening of the gate for substrate entry. Interconversion between the open-gate and close-gate conformations leads to a dynamic regulation of the 20S proteasome proteolysis activity.</text>
</comment>
<comment type="subunit">
    <text evidence="1">The 20S proteasome core is composed of 14 alpha and 14 beta subunits that assemble into four stacked heptameric rings, resulting in a barrel-shaped structure. The two inner rings, each composed of seven catalytic beta subunits, are sandwiched by two outer rings, each composed of seven alpha subunits. The catalytic chamber with the active sites is on the inside of the barrel. Has a gated structure, the ends of the cylinder being occluded by the N-termini of the alpha-subunits. Is capped at one or both ends by the proteasome regulatory ATPase, PAN.</text>
</comment>
<comment type="subcellular location">
    <subcellularLocation>
        <location evidence="1">Cytoplasm</location>
    </subcellularLocation>
</comment>
<comment type="similarity">
    <text evidence="1">Belongs to the peptidase T1B family.</text>
</comment>